<keyword id="KW-0963">Cytoplasm</keyword>
<keyword id="KW-0275">Fatty acid biosynthesis</keyword>
<keyword id="KW-0276">Fatty acid metabolism</keyword>
<keyword id="KW-0444">Lipid biosynthesis</keyword>
<keyword id="KW-0443">Lipid metabolism</keyword>
<keyword id="KW-0460">Magnesium</keyword>
<keyword id="KW-0479">Metal-binding</keyword>
<keyword id="KW-0808">Transferase</keyword>
<dbReference type="EC" id="2.7.8.7" evidence="1"/>
<dbReference type="EMBL" id="AP009493">
    <property type="protein sequence ID" value="BAG19618.1"/>
    <property type="molecule type" value="Genomic_DNA"/>
</dbReference>
<dbReference type="RefSeq" id="WP_012379449.1">
    <property type="nucleotide sequence ID" value="NC_010572.1"/>
</dbReference>
<dbReference type="SMR" id="B1W3W2"/>
<dbReference type="KEGG" id="sgr:SGR_2789"/>
<dbReference type="eggNOG" id="COG0736">
    <property type="taxonomic scope" value="Bacteria"/>
</dbReference>
<dbReference type="HOGENOM" id="CLU_089696_0_0_11"/>
<dbReference type="Proteomes" id="UP000001685">
    <property type="component" value="Chromosome"/>
</dbReference>
<dbReference type="GO" id="GO:0005737">
    <property type="term" value="C:cytoplasm"/>
    <property type="evidence" value="ECO:0007669"/>
    <property type="project" value="UniProtKB-SubCell"/>
</dbReference>
<dbReference type="GO" id="GO:0008897">
    <property type="term" value="F:holo-[acyl-carrier-protein] synthase activity"/>
    <property type="evidence" value="ECO:0007669"/>
    <property type="project" value="UniProtKB-UniRule"/>
</dbReference>
<dbReference type="GO" id="GO:0000287">
    <property type="term" value="F:magnesium ion binding"/>
    <property type="evidence" value="ECO:0007669"/>
    <property type="project" value="UniProtKB-UniRule"/>
</dbReference>
<dbReference type="GO" id="GO:0006633">
    <property type="term" value="P:fatty acid biosynthetic process"/>
    <property type="evidence" value="ECO:0007669"/>
    <property type="project" value="UniProtKB-UniRule"/>
</dbReference>
<dbReference type="Gene3D" id="3.90.470.20">
    <property type="entry name" value="4'-phosphopantetheinyl transferase domain"/>
    <property type="match status" value="1"/>
</dbReference>
<dbReference type="HAMAP" id="MF_00101">
    <property type="entry name" value="AcpS"/>
    <property type="match status" value="1"/>
</dbReference>
<dbReference type="InterPro" id="IPR008278">
    <property type="entry name" value="4-PPantetheinyl_Trfase_dom"/>
</dbReference>
<dbReference type="InterPro" id="IPR037143">
    <property type="entry name" value="4-PPantetheinyl_Trfase_dom_sf"/>
</dbReference>
<dbReference type="InterPro" id="IPR002582">
    <property type="entry name" value="ACPS"/>
</dbReference>
<dbReference type="InterPro" id="IPR004568">
    <property type="entry name" value="Ppantetheine-prot_Trfase_dom"/>
</dbReference>
<dbReference type="NCBIfam" id="TIGR00516">
    <property type="entry name" value="acpS"/>
    <property type="match status" value="1"/>
</dbReference>
<dbReference type="NCBIfam" id="TIGR00556">
    <property type="entry name" value="pantethn_trn"/>
    <property type="match status" value="1"/>
</dbReference>
<dbReference type="NCBIfam" id="NF000832">
    <property type="entry name" value="PRK00070.3-2"/>
    <property type="match status" value="1"/>
</dbReference>
<dbReference type="Pfam" id="PF01648">
    <property type="entry name" value="ACPS"/>
    <property type="match status" value="1"/>
</dbReference>
<dbReference type="SUPFAM" id="SSF56214">
    <property type="entry name" value="4'-phosphopantetheinyl transferase"/>
    <property type="match status" value="1"/>
</dbReference>
<name>ACPS_STRGG</name>
<evidence type="ECO:0000255" key="1">
    <source>
        <dbReference type="HAMAP-Rule" id="MF_00101"/>
    </source>
</evidence>
<proteinExistence type="inferred from homology"/>
<comment type="function">
    <text evidence="1">Transfers the 4'-phosphopantetheine moiety from coenzyme A to a Ser of acyl-carrier-protein.</text>
</comment>
<comment type="catalytic activity">
    <reaction evidence="1">
        <text>apo-[ACP] + CoA = holo-[ACP] + adenosine 3',5'-bisphosphate + H(+)</text>
        <dbReference type="Rhea" id="RHEA:12068"/>
        <dbReference type="Rhea" id="RHEA-COMP:9685"/>
        <dbReference type="Rhea" id="RHEA-COMP:9690"/>
        <dbReference type="ChEBI" id="CHEBI:15378"/>
        <dbReference type="ChEBI" id="CHEBI:29999"/>
        <dbReference type="ChEBI" id="CHEBI:57287"/>
        <dbReference type="ChEBI" id="CHEBI:58343"/>
        <dbReference type="ChEBI" id="CHEBI:64479"/>
        <dbReference type="EC" id="2.7.8.7"/>
    </reaction>
</comment>
<comment type="cofactor">
    <cofactor evidence="1">
        <name>Mg(2+)</name>
        <dbReference type="ChEBI" id="CHEBI:18420"/>
    </cofactor>
</comment>
<comment type="subcellular location">
    <subcellularLocation>
        <location evidence="1">Cytoplasm</location>
    </subcellularLocation>
</comment>
<comment type="similarity">
    <text evidence="1">Belongs to the P-Pant transferase superfamily. AcpS family.</text>
</comment>
<protein>
    <recommendedName>
        <fullName evidence="1">Holo-[acyl-carrier-protein] synthase</fullName>
        <shortName evidence="1">Holo-ACP synthase</shortName>
        <ecNumber evidence="1">2.7.8.7</ecNumber>
    </recommendedName>
    <alternativeName>
        <fullName evidence="1">4'-phosphopantetheinyl transferase AcpS</fullName>
    </alternativeName>
</protein>
<organism>
    <name type="scientific">Streptomyces griseus subsp. griseus (strain JCM 4626 / CBS 651.72 / NBRC 13350 / KCC S-0626 / ISP 5235)</name>
    <dbReference type="NCBI Taxonomy" id="455632"/>
    <lineage>
        <taxon>Bacteria</taxon>
        <taxon>Bacillati</taxon>
        <taxon>Actinomycetota</taxon>
        <taxon>Actinomycetes</taxon>
        <taxon>Kitasatosporales</taxon>
        <taxon>Streptomycetaceae</taxon>
        <taxon>Streptomyces</taxon>
    </lineage>
</organism>
<accession>B1W3W2</accession>
<feature type="chain" id="PRO_1000117355" description="Holo-[acyl-carrier-protein] synthase">
    <location>
        <begin position="1"/>
        <end position="122"/>
    </location>
</feature>
<feature type="binding site" evidence="1">
    <location>
        <position position="8"/>
    </location>
    <ligand>
        <name>Mg(2+)</name>
        <dbReference type="ChEBI" id="CHEBI:18420"/>
    </ligand>
</feature>
<feature type="binding site" evidence="1">
    <location>
        <position position="56"/>
    </location>
    <ligand>
        <name>Mg(2+)</name>
        <dbReference type="ChEBI" id="CHEBI:18420"/>
    </ligand>
</feature>
<reference key="1">
    <citation type="journal article" date="2008" name="J. Bacteriol.">
        <title>Genome sequence of the streptomycin-producing microorganism Streptomyces griseus IFO 13350.</title>
        <authorList>
            <person name="Ohnishi Y."/>
            <person name="Ishikawa J."/>
            <person name="Hara H."/>
            <person name="Suzuki H."/>
            <person name="Ikenoya M."/>
            <person name="Ikeda H."/>
            <person name="Yamashita A."/>
            <person name="Hattori M."/>
            <person name="Horinouchi S."/>
        </authorList>
    </citation>
    <scope>NUCLEOTIDE SEQUENCE [LARGE SCALE GENOMIC DNA]</scope>
    <source>
        <strain>JCM 4626 / CBS 651.72 / NBRC 13350 / KCC S-0626 / ISP 5235</strain>
    </source>
</reference>
<gene>
    <name evidence="1" type="primary">acpS</name>
    <name type="ordered locus">SGR_2789</name>
</gene>
<sequence>MIIGVGIDVAEIERFGAALERTPQLADRLFVGSELTLPSGERRGIASLAARFAAKEALAKALGAPGGLLWSDAEVWVEESGQPRLRVSGTVAARAAELGVRGWHVSLSHDAGVASAVVIAEG</sequence>